<comment type="function">
    <text evidence="1">An accessory protein needed during the final step in the assembly of 30S ribosomal subunit, possibly for assembly of the head region. Essential for efficient processing of 16S rRNA. May be needed both before and after RbfA during the maturation of 16S rRNA. It has affinity for free ribosomal 30S subunits but not for 70S ribosomes.</text>
</comment>
<comment type="subunit">
    <text evidence="1">Binds ribosomal protein uS19.</text>
</comment>
<comment type="subcellular location">
    <subcellularLocation>
        <location evidence="1">Cytoplasm</location>
    </subcellularLocation>
</comment>
<comment type="domain">
    <text evidence="1">The PRC barrel domain binds ribosomal protein uS19.</text>
</comment>
<comment type="similarity">
    <text evidence="1">Belongs to the RimM family.</text>
</comment>
<feature type="chain" id="PRO_0000163314" description="Ribosome maturation factor RimM">
    <location>
        <begin position="1"/>
        <end position="172"/>
    </location>
</feature>
<feature type="domain" description="PRC barrel" evidence="1">
    <location>
        <begin position="97"/>
        <end position="170"/>
    </location>
</feature>
<sequence length="172" mass="19753">MEKMYNVGKIVNTHGLIGEIRVIATTDFPEERFQVGNTVYLFEKNSKKPEKLIIRSHRKHKNFDLLMFEGFTGIHQVERMKEGVLKIKETQLTNLEENEFYFHEIIGCTVVTTDGEELGEITEILTPGANDVWVVKGADKKEKLIPYIADVVKEINIDDQKITIEVMEGLLD</sequence>
<protein>
    <recommendedName>
        <fullName evidence="1">Ribosome maturation factor RimM</fullName>
    </recommendedName>
</protein>
<accession>Q8Y6A2</accession>
<gene>
    <name evidence="1" type="primary">rimM</name>
    <name type="ordered locus">lmo1793</name>
</gene>
<organism>
    <name type="scientific">Listeria monocytogenes serovar 1/2a (strain ATCC BAA-679 / EGD-e)</name>
    <dbReference type="NCBI Taxonomy" id="169963"/>
    <lineage>
        <taxon>Bacteria</taxon>
        <taxon>Bacillati</taxon>
        <taxon>Bacillota</taxon>
        <taxon>Bacilli</taxon>
        <taxon>Bacillales</taxon>
        <taxon>Listeriaceae</taxon>
        <taxon>Listeria</taxon>
    </lineage>
</organism>
<evidence type="ECO:0000255" key="1">
    <source>
        <dbReference type="HAMAP-Rule" id="MF_00014"/>
    </source>
</evidence>
<proteinExistence type="inferred from homology"/>
<keyword id="KW-0143">Chaperone</keyword>
<keyword id="KW-0963">Cytoplasm</keyword>
<keyword id="KW-1185">Reference proteome</keyword>
<keyword id="KW-0690">Ribosome biogenesis</keyword>
<keyword id="KW-0698">rRNA processing</keyword>
<reference key="1">
    <citation type="journal article" date="2001" name="Science">
        <title>Comparative genomics of Listeria species.</title>
        <authorList>
            <person name="Glaser P."/>
            <person name="Frangeul L."/>
            <person name="Buchrieser C."/>
            <person name="Rusniok C."/>
            <person name="Amend A."/>
            <person name="Baquero F."/>
            <person name="Berche P."/>
            <person name="Bloecker H."/>
            <person name="Brandt P."/>
            <person name="Chakraborty T."/>
            <person name="Charbit A."/>
            <person name="Chetouani F."/>
            <person name="Couve E."/>
            <person name="de Daruvar A."/>
            <person name="Dehoux P."/>
            <person name="Domann E."/>
            <person name="Dominguez-Bernal G."/>
            <person name="Duchaud E."/>
            <person name="Durant L."/>
            <person name="Dussurget O."/>
            <person name="Entian K.-D."/>
            <person name="Fsihi H."/>
            <person name="Garcia-del Portillo F."/>
            <person name="Garrido P."/>
            <person name="Gautier L."/>
            <person name="Goebel W."/>
            <person name="Gomez-Lopez N."/>
            <person name="Hain T."/>
            <person name="Hauf J."/>
            <person name="Jackson D."/>
            <person name="Jones L.-M."/>
            <person name="Kaerst U."/>
            <person name="Kreft J."/>
            <person name="Kuhn M."/>
            <person name="Kunst F."/>
            <person name="Kurapkat G."/>
            <person name="Madueno E."/>
            <person name="Maitournam A."/>
            <person name="Mata Vicente J."/>
            <person name="Ng E."/>
            <person name="Nedjari H."/>
            <person name="Nordsiek G."/>
            <person name="Novella S."/>
            <person name="de Pablos B."/>
            <person name="Perez-Diaz J.-C."/>
            <person name="Purcell R."/>
            <person name="Remmel B."/>
            <person name="Rose M."/>
            <person name="Schlueter T."/>
            <person name="Simoes N."/>
            <person name="Tierrez A."/>
            <person name="Vazquez-Boland J.-A."/>
            <person name="Voss H."/>
            <person name="Wehland J."/>
            <person name="Cossart P."/>
        </authorList>
    </citation>
    <scope>NUCLEOTIDE SEQUENCE [LARGE SCALE GENOMIC DNA]</scope>
    <source>
        <strain>ATCC BAA-679 / EGD-e</strain>
    </source>
</reference>
<name>RIMM_LISMO</name>
<dbReference type="EMBL" id="AL591981">
    <property type="protein sequence ID" value="CAC99871.1"/>
    <property type="molecule type" value="Genomic_DNA"/>
</dbReference>
<dbReference type="PIR" id="AI1298">
    <property type="entry name" value="AI1298"/>
</dbReference>
<dbReference type="RefSeq" id="NP_465318.1">
    <property type="nucleotide sequence ID" value="NC_003210.1"/>
</dbReference>
<dbReference type="RefSeq" id="WP_010989813.1">
    <property type="nucleotide sequence ID" value="NZ_CP149495.1"/>
</dbReference>
<dbReference type="SMR" id="Q8Y6A2"/>
<dbReference type="STRING" id="169963.gene:17594478"/>
<dbReference type="PaxDb" id="169963-lmo1793"/>
<dbReference type="EnsemblBacteria" id="CAC99871">
    <property type="protein sequence ID" value="CAC99871"/>
    <property type="gene ID" value="CAC99871"/>
</dbReference>
<dbReference type="GeneID" id="985937"/>
<dbReference type="KEGG" id="lmo:lmo1793"/>
<dbReference type="PATRIC" id="fig|169963.11.peg.1837"/>
<dbReference type="eggNOG" id="COG0806">
    <property type="taxonomic scope" value="Bacteria"/>
</dbReference>
<dbReference type="HOGENOM" id="CLU_077636_3_1_9"/>
<dbReference type="OrthoDB" id="9810331at2"/>
<dbReference type="PhylomeDB" id="Q8Y6A2"/>
<dbReference type="BioCyc" id="LMON169963:LMO1793-MONOMER"/>
<dbReference type="Proteomes" id="UP000000817">
    <property type="component" value="Chromosome"/>
</dbReference>
<dbReference type="GO" id="GO:0005829">
    <property type="term" value="C:cytosol"/>
    <property type="evidence" value="ECO:0000318"/>
    <property type="project" value="GO_Central"/>
</dbReference>
<dbReference type="GO" id="GO:0005840">
    <property type="term" value="C:ribosome"/>
    <property type="evidence" value="ECO:0007669"/>
    <property type="project" value="InterPro"/>
</dbReference>
<dbReference type="GO" id="GO:0043022">
    <property type="term" value="F:ribosome binding"/>
    <property type="evidence" value="ECO:0007669"/>
    <property type="project" value="InterPro"/>
</dbReference>
<dbReference type="GO" id="GO:0030490">
    <property type="term" value="P:maturation of SSU-rRNA"/>
    <property type="evidence" value="ECO:0000318"/>
    <property type="project" value="GO_Central"/>
</dbReference>
<dbReference type="Gene3D" id="2.30.30.240">
    <property type="entry name" value="PRC-barrel domain"/>
    <property type="match status" value="1"/>
</dbReference>
<dbReference type="Gene3D" id="2.40.30.60">
    <property type="entry name" value="RimM"/>
    <property type="match status" value="1"/>
</dbReference>
<dbReference type="HAMAP" id="MF_00014">
    <property type="entry name" value="Ribosome_mat_RimM"/>
    <property type="match status" value="1"/>
</dbReference>
<dbReference type="InterPro" id="IPR027275">
    <property type="entry name" value="PRC-brl_dom"/>
</dbReference>
<dbReference type="InterPro" id="IPR011033">
    <property type="entry name" value="PRC_barrel-like_sf"/>
</dbReference>
<dbReference type="InterPro" id="IPR011961">
    <property type="entry name" value="RimM"/>
</dbReference>
<dbReference type="InterPro" id="IPR002676">
    <property type="entry name" value="RimM_N"/>
</dbReference>
<dbReference type="InterPro" id="IPR036976">
    <property type="entry name" value="RimM_N_sf"/>
</dbReference>
<dbReference type="InterPro" id="IPR009000">
    <property type="entry name" value="Transl_B-barrel_sf"/>
</dbReference>
<dbReference type="NCBIfam" id="TIGR02273">
    <property type="entry name" value="16S_RimM"/>
    <property type="match status" value="1"/>
</dbReference>
<dbReference type="PANTHER" id="PTHR33692">
    <property type="entry name" value="RIBOSOME MATURATION FACTOR RIMM"/>
    <property type="match status" value="1"/>
</dbReference>
<dbReference type="PANTHER" id="PTHR33692:SF1">
    <property type="entry name" value="RIBOSOME MATURATION FACTOR RIMM"/>
    <property type="match status" value="1"/>
</dbReference>
<dbReference type="Pfam" id="PF05239">
    <property type="entry name" value="PRC"/>
    <property type="match status" value="1"/>
</dbReference>
<dbReference type="Pfam" id="PF01782">
    <property type="entry name" value="RimM"/>
    <property type="match status" value="1"/>
</dbReference>
<dbReference type="SUPFAM" id="SSF50346">
    <property type="entry name" value="PRC-barrel domain"/>
    <property type="match status" value="1"/>
</dbReference>
<dbReference type="SUPFAM" id="SSF50447">
    <property type="entry name" value="Translation proteins"/>
    <property type="match status" value="1"/>
</dbReference>